<keyword id="KW-1185">Reference proteome</keyword>
<keyword id="KW-0687">Ribonucleoprotein</keyword>
<keyword id="KW-0689">Ribosomal protein</keyword>
<gene>
    <name evidence="1" type="primary">rpmF</name>
    <name type="ordered locus">RD1_3154</name>
</gene>
<sequence>MAVQQNKVSKSRRNNRRAHDSLVAANPNECTNCGELKRPHHICAACGHYDDKEVVALTEEIDLEDDAA</sequence>
<reference key="1">
    <citation type="journal article" date="2007" name="J. Bacteriol.">
        <title>The complete genome sequence of Roseobacter denitrificans reveals a mixotrophic rather than photosynthetic metabolism.</title>
        <authorList>
            <person name="Swingley W.D."/>
            <person name="Sadekar S."/>
            <person name="Mastrian S.D."/>
            <person name="Matthies H.J."/>
            <person name="Hao J."/>
            <person name="Ramos H."/>
            <person name="Acharya C.R."/>
            <person name="Conrad A.L."/>
            <person name="Taylor H.L."/>
            <person name="Dejesa L.C."/>
            <person name="Shah M.K."/>
            <person name="O'Huallachain M.E."/>
            <person name="Lince M.T."/>
            <person name="Blankenship R.E."/>
            <person name="Beatty J.T."/>
            <person name="Touchman J.W."/>
        </authorList>
    </citation>
    <scope>NUCLEOTIDE SEQUENCE [LARGE SCALE GENOMIC DNA]</scope>
    <source>
        <strain>ATCC 33942 / OCh 114</strain>
    </source>
</reference>
<proteinExistence type="inferred from homology"/>
<organism>
    <name type="scientific">Roseobacter denitrificans (strain ATCC 33942 / OCh 114)</name>
    <name type="common">Erythrobacter sp. (strain OCh 114)</name>
    <name type="synonym">Roseobacter denitrificans</name>
    <dbReference type="NCBI Taxonomy" id="375451"/>
    <lineage>
        <taxon>Bacteria</taxon>
        <taxon>Pseudomonadati</taxon>
        <taxon>Pseudomonadota</taxon>
        <taxon>Alphaproteobacteria</taxon>
        <taxon>Rhodobacterales</taxon>
        <taxon>Roseobacteraceae</taxon>
        <taxon>Roseobacter</taxon>
    </lineage>
</organism>
<evidence type="ECO:0000255" key="1">
    <source>
        <dbReference type="HAMAP-Rule" id="MF_00340"/>
    </source>
</evidence>
<evidence type="ECO:0000256" key="2">
    <source>
        <dbReference type="SAM" id="MobiDB-lite"/>
    </source>
</evidence>
<evidence type="ECO:0000305" key="3"/>
<protein>
    <recommendedName>
        <fullName evidence="1">Large ribosomal subunit protein bL32</fullName>
    </recommendedName>
    <alternativeName>
        <fullName evidence="3">50S ribosomal protein L32</fullName>
    </alternativeName>
</protein>
<dbReference type="EMBL" id="CP000362">
    <property type="protein sequence ID" value="ABG32662.1"/>
    <property type="molecule type" value="Genomic_DNA"/>
</dbReference>
<dbReference type="RefSeq" id="WP_011569278.1">
    <property type="nucleotide sequence ID" value="NC_008209.1"/>
</dbReference>
<dbReference type="SMR" id="Q164D1"/>
<dbReference type="STRING" id="375451.RD1_3154"/>
<dbReference type="KEGG" id="rde:RD1_3154"/>
<dbReference type="eggNOG" id="COG0333">
    <property type="taxonomic scope" value="Bacteria"/>
</dbReference>
<dbReference type="HOGENOM" id="CLU_129084_1_3_5"/>
<dbReference type="OrthoDB" id="9801927at2"/>
<dbReference type="Proteomes" id="UP000007029">
    <property type="component" value="Chromosome"/>
</dbReference>
<dbReference type="GO" id="GO:0015934">
    <property type="term" value="C:large ribosomal subunit"/>
    <property type="evidence" value="ECO:0007669"/>
    <property type="project" value="InterPro"/>
</dbReference>
<dbReference type="GO" id="GO:0003735">
    <property type="term" value="F:structural constituent of ribosome"/>
    <property type="evidence" value="ECO:0007669"/>
    <property type="project" value="InterPro"/>
</dbReference>
<dbReference type="GO" id="GO:0006412">
    <property type="term" value="P:translation"/>
    <property type="evidence" value="ECO:0007669"/>
    <property type="project" value="UniProtKB-UniRule"/>
</dbReference>
<dbReference type="HAMAP" id="MF_00340">
    <property type="entry name" value="Ribosomal_bL32"/>
    <property type="match status" value="1"/>
</dbReference>
<dbReference type="InterPro" id="IPR002677">
    <property type="entry name" value="Ribosomal_bL32"/>
</dbReference>
<dbReference type="InterPro" id="IPR044957">
    <property type="entry name" value="Ribosomal_bL32_bact"/>
</dbReference>
<dbReference type="InterPro" id="IPR011332">
    <property type="entry name" value="Ribosomal_zn-bd"/>
</dbReference>
<dbReference type="NCBIfam" id="TIGR01031">
    <property type="entry name" value="rpmF_bact"/>
    <property type="match status" value="1"/>
</dbReference>
<dbReference type="PANTHER" id="PTHR35534">
    <property type="entry name" value="50S RIBOSOMAL PROTEIN L32"/>
    <property type="match status" value="1"/>
</dbReference>
<dbReference type="PANTHER" id="PTHR35534:SF1">
    <property type="entry name" value="LARGE RIBOSOMAL SUBUNIT PROTEIN BL32"/>
    <property type="match status" value="1"/>
</dbReference>
<dbReference type="Pfam" id="PF01783">
    <property type="entry name" value="Ribosomal_L32p"/>
    <property type="match status" value="1"/>
</dbReference>
<dbReference type="SUPFAM" id="SSF57829">
    <property type="entry name" value="Zn-binding ribosomal proteins"/>
    <property type="match status" value="1"/>
</dbReference>
<name>RL32_ROSDO</name>
<feature type="chain" id="PRO_0000296551" description="Large ribosomal subunit protein bL32">
    <location>
        <begin position="1"/>
        <end position="68"/>
    </location>
</feature>
<feature type="region of interest" description="Disordered" evidence="2">
    <location>
        <begin position="1"/>
        <end position="21"/>
    </location>
</feature>
<comment type="similarity">
    <text evidence="1">Belongs to the bacterial ribosomal protein bL32 family.</text>
</comment>
<accession>Q164D1</accession>